<comment type="function">
    <text evidence="1 2">Part of the dynactin complex that activates the molecular motor dynein for ultra-processive transport along microtubules (By similarity). Plays a key role in dynein-mediated retrograde transport of vesicles and organelles along microtubules by recruiting and tethering dynein to microtubules. Binds to both dynein and microtubules providing a link between specific cargos, microtubules and dynein. Essential for targeting dynein to microtubule plus ends, recruiting dynein to membranous cargos and enhancing dynein processivity (the ability to move along a microtubule for a long distance without falling off the track). Can also act as a brake to slow the dynein motor during motility along the microtubule. Can regulate microtubule stability by promoting microtubule formation, nucleation and polymerization and by inhibiting microtubule catastrophe in neurons. Inhibits microtubule catastrophe by binding both to microtubules and to tubulin, leading to enhanced microtubule stability along the axon. Plays a role in metaphase spindle orientation. Plays a role in centriole cohesion and subdistal appendage organization and function. Its recruitment to the centriole in a KIF3A-dependent manner is essential for the maintenance of centriole cohesion and the formation of subdistal appendage. Also required for microtubule anchoring at the mother centriole. Plays a role in primary cilia formation (By similarity).</text>
</comment>
<comment type="subunit">
    <text evidence="1 2">Monomer and homodimer (By similarity). Subunit of dynactin, a multiprotein complex part of a tripartite complex with dynein and a adapter, such as BICDL1, BICD2 or HOOK3. The dynactin complex is built around ACTR1A/ACTB filament and consists of an actin-related filament composed of a shoulder domain, a pointed end and a barbed end. Its length is defined by its flexible shoulder domain. The soulder is composed of 2 DCTN1 subunits, 4 DCTN2 and 2 DCTN3. DCTN1/p150(glued) binds directly to microtubules and to cytoplasmic dynein (By similarity).</text>
</comment>
<comment type="subcellular location">
    <subcellularLocation>
        <location evidence="2">Cytoplasm</location>
    </subcellularLocation>
    <subcellularLocation>
        <location evidence="2">Cytoplasm</location>
        <location evidence="2">Cytoskeleton</location>
    </subcellularLocation>
    <subcellularLocation>
        <location evidence="2">Cytoplasm</location>
        <location evidence="2">Cytoskeleton</location>
        <location evidence="2">Microtubule organizing center</location>
        <location evidence="2">Centrosome</location>
    </subcellularLocation>
    <subcellularLocation>
        <location evidence="2">Cytoplasm</location>
        <location evidence="2">Cytoskeleton</location>
        <location evidence="2">Microtubule organizing center</location>
        <location evidence="2">Centrosome</location>
        <location evidence="2">Centriole</location>
    </subcellularLocation>
    <subcellularLocation>
        <location evidence="2">Cytoplasm</location>
        <location evidence="2">Cytoskeleton</location>
        <location evidence="2">Spindle</location>
    </subcellularLocation>
    <subcellularLocation>
        <location evidence="2">Cytoplasm</location>
        <location evidence="2">Cell cortex</location>
    </subcellularLocation>
    <text evidence="2">Localizes to microtubule plus ends. Localizes preferentially to tyrosinated microtubules than to detyrosinated microtubules.</text>
</comment>
<comment type="similarity">
    <text evidence="6">Belongs to the dynactin 150 kDa subunit family.</text>
</comment>
<gene>
    <name type="primary">dctn1</name>
</gene>
<name>DCTN1_XENLA</name>
<feature type="chain" id="PRO_0000083522" description="Dynactin subunit 1">
    <location>
        <begin position="1"/>
        <end position="1232"/>
    </location>
</feature>
<feature type="domain" description="CAP-Gly" evidence="4">
    <location>
        <begin position="31"/>
        <end position="73"/>
    </location>
</feature>
<feature type="region of interest" description="Disordered" evidence="5">
    <location>
        <begin position="82"/>
        <end position="183"/>
    </location>
</feature>
<feature type="region of interest" description="Disordered" evidence="5">
    <location>
        <begin position="339"/>
        <end position="358"/>
    </location>
</feature>
<feature type="coiled-coil region" evidence="3">
    <location>
        <begin position="170"/>
        <end position="505"/>
    </location>
</feature>
<feature type="coiled-coil region" evidence="3">
    <location>
        <begin position="908"/>
        <end position="1005"/>
    </location>
</feature>
<feature type="coiled-coil region" evidence="3">
    <location>
        <begin position="1046"/>
        <end position="1071"/>
    </location>
</feature>
<feature type="coiled-coil region" evidence="3">
    <location>
        <begin position="1136"/>
        <end position="1166"/>
    </location>
</feature>
<feature type="compositionally biased region" description="Low complexity" evidence="5">
    <location>
        <begin position="86"/>
        <end position="95"/>
    </location>
</feature>
<feature type="compositionally biased region" description="Polar residues" evidence="5">
    <location>
        <begin position="108"/>
        <end position="117"/>
    </location>
</feature>
<feature type="compositionally biased region" description="Low complexity" evidence="5">
    <location>
        <begin position="118"/>
        <end position="130"/>
    </location>
</feature>
<feature type="compositionally biased region" description="Polar residues" evidence="5">
    <location>
        <begin position="133"/>
        <end position="144"/>
    </location>
</feature>
<feature type="compositionally biased region" description="Low complexity" evidence="5">
    <location>
        <begin position="146"/>
        <end position="163"/>
    </location>
</feature>
<feature type="compositionally biased region" description="Basic and acidic residues" evidence="5">
    <location>
        <begin position="172"/>
        <end position="183"/>
    </location>
</feature>
<evidence type="ECO:0000250" key="1">
    <source>
        <dbReference type="UniProtKB" id="A0A287B8J2"/>
    </source>
</evidence>
<evidence type="ECO:0000250" key="2">
    <source>
        <dbReference type="UniProtKB" id="Q14203"/>
    </source>
</evidence>
<evidence type="ECO:0000255" key="3"/>
<evidence type="ECO:0000255" key="4">
    <source>
        <dbReference type="PROSITE-ProRule" id="PRU00045"/>
    </source>
</evidence>
<evidence type="ECO:0000256" key="5">
    <source>
        <dbReference type="SAM" id="MobiDB-lite"/>
    </source>
</evidence>
<evidence type="ECO:0000305" key="6"/>
<reference key="1">
    <citation type="submission" date="2003-10" db="EMBL/GenBank/DDBJ databases">
        <authorList>
            <consortium name="NIH - Xenopus Gene Collection (XGC) project"/>
        </authorList>
    </citation>
    <scope>NUCLEOTIDE SEQUENCE [LARGE SCALE MRNA]</scope>
    <source>
        <tissue>Embryo</tissue>
    </source>
</reference>
<keyword id="KW-0131">Cell cycle</keyword>
<keyword id="KW-0132">Cell division</keyword>
<keyword id="KW-0175">Coiled coil</keyword>
<keyword id="KW-0963">Cytoplasm</keyword>
<keyword id="KW-0206">Cytoskeleton</keyword>
<keyword id="KW-0243">Dynein</keyword>
<keyword id="KW-0493">Microtubule</keyword>
<keyword id="KW-0498">Mitosis</keyword>
<keyword id="KW-1185">Reference proteome</keyword>
<proteinExistence type="evidence at transcript level"/>
<sequence length="1232" mass="137285">MSVEATGKPLKVGSRVEVIGKGYRGTVAYVGATLFATGKWVGVILDDSKGKNDGTVQGRRYFTCEENHGIFVRQSQIQVIEDGADTTSPETPEPTASKGLKKDVMETPKSSKLPTRPSSSAASSGTASASCGEISSSEPSTPAQTPLAAPIIPSPSSAITSPVAPLPGPGPSKEEENLRAQVKDLEEKLETLKMKRAEDKAKLKEMEKSKLQLEQVQEWKSKMQEQQADIQRQLKEAKKEAKEALEAKERYMEEMADTADAIEMATLDKEMAEERAESLQQEVDTLKDKVEEHKIDLEILKHEIEEKGSDGAASSYQVKQLEEQNARLKEALVRMRDLSASEKQEHIKVQKQMEKKNTELDTLRQQKEKLQEEASHMEKTIDELKEQVDAALGAEEMVETLAERNLDLEEKVRELRETVSDLEAINEMNDELQENARETELELREQLDMAGARVREAEKRVEAAQETVADYQQTIKKYRDLTAHLQEVNSELRNQQEASVEKEQQPSPEMFDFKIKFAETKAHAKAIEMELRKMEVTQANRHVSLLTSFMPDSFLRHGGDHDCILVLLLIPRLICKAELISKQAQEKFELSEVGEQKSGMRGAVGEQMSFAAGLVYSLTLLQATLHKYEQALDKCSVEVYKKVGMLYPEMSVHERSLDFLIELLHKDQLDETVNVEPLTKAIKYYQHLYSIHLADQAEECTMQLSDHIKFTQSALDCMGVEVSRLRAFLHAGQESSDFAILLKDLETSCSDIRQFCKKIRRRMPGTEAAGIPAALGFGQQVCETLLDCRKYLKCVVAVFQEVAAAGAQMIAPMGENEGLQALKLEDVAFKATEQIYGTKGSNPYECLRQSCSVVIATMNKMATAMQEGEYDAEKPQSKSPPPVEQRAAALRAEITDAEGLGLKLEDRETVIKELKKSLKIKGEELSEANVRLSLLEKKLDSASKEADDRVEKIQTKLEETQTVLKKKEKEFEETMDALQADIDQLESEKAELRQRLNNQSKRTIEGLRGVPASGVASIVSGLAGGVSSGQSLINGSGPVQVKDSPLLLQQIDALRLSMKHLKHENNKLKAHQIKTDLSSLPALHVPKLTLPKDRQKEEAMSGTLYRKTSQLLDALQQMSANAKVVDITHKKAGNPAAQLLEQTARLKSLSDTIDKLKNEVMKETVSQCPGANVPTDFATFPSTDFIKAKEEKKEDTVYIGKVTLSCQPGQGQIHKLVLTPEQLHELHERLIC</sequence>
<dbReference type="EMBL" id="BC059305">
    <property type="protein sequence ID" value="AAH59305.1"/>
    <property type="molecule type" value="mRNA"/>
</dbReference>
<dbReference type="RefSeq" id="NP_001080006.1">
    <property type="nucleotide sequence ID" value="NM_001086537.1"/>
</dbReference>
<dbReference type="SMR" id="Q6PCJ1"/>
<dbReference type="IntAct" id="Q6PCJ1">
    <property type="interactions" value="3"/>
</dbReference>
<dbReference type="GeneID" id="379696"/>
<dbReference type="KEGG" id="xla:379696"/>
<dbReference type="AGR" id="Xenbase:XB-GENE-5933563"/>
<dbReference type="CTD" id="379696"/>
<dbReference type="Xenbase" id="XB-GENE-5933563">
    <property type="gene designation" value="dctn1.L"/>
</dbReference>
<dbReference type="OMA" id="LFEMEPV"/>
<dbReference type="OrthoDB" id="2130750at2759"/>
<dbReference type="Proteomes" id="UP000186698">
    <property type="component" value="Chromosome 1L"/>
</dbReference>
<dbReference type="Bgee" id="379696">
    <property type="expression patterns" value="Expressed in brain and 19 other cell types or tissues"/>
</dbReference>
<dbReference type="GO" id="GO:0030424">
    <property type="term" value="C:axon"/>
    <property type="evidence" value="ECO:0000318"/>
    <property type="project" value="GO_Central"/>
</dbReference>
<dbReference type="GO" id="GO:0005938">
    <property type="term" value="C:cell cortex"/>
    <property type="evidence" value="ECO:0000250"/>
    <property type="project" value="UniProtKB"/>
</dbReference>
<dbReference type="GO" id="GO:0099738">
    <property type="term" value="C:cell cortex region"/>
    <property type="evidence" value="ECO:0000250"/>
    <property type="project" value="UniProtKB"/>
</dbReference>
<dbReference type="GO" id="GO:0005814">
    <property type="term" value="C:centriole"/>
    <property type="evidence" value="ECO:0000250"/>
    <property type="project" value="UniProtKB"/>
</dbReference>
<dbReference type="GO" id="GO:0005813">
    <property type="term" value="C:centrosome"/>
    <property type="evidence" value="ECO:0000250"/>
    <property type="project" value="UniProtKB"/>
</dbReference>
<dbReference type="GO" id="GO:0030286">
    <property type="term" value="C:dynein complex"/>
    <property type="evidence" value="ECO:0007669"/>
    <property type="project" value="UniProtKB-KW"/>
</dbReference>
<dbReference type="GO" id="GO:0000776">
    <property type="term" value="C:kinetochore"/>
    <property type="evidence" value="ECO:0000250"/>
    <property type="project" value="UniProtKB"/>
</dbReference>
<dbReference type="GO" id="GO:0005874">
    <property type="term" value="C:microtubule"/>
    <property type="evidence" value="ECO:0000250"/>
    <property type="project" value="UniProtKB"/>
</dbReference>
<dbReference type="GO" id="GO:0005875">
    <property type="term" value="C:microtubule associated complex"/>
    <property type="evidence" value="ECO:0000318"/>
    <property type="project" value="GO_Central"/>
</dbReference>
<dbReference type="GO" id="GO:0035371">
    <property type="term" value="C:microtubule plus-end"/>
    <property type="evidence" value="ECO:0000250"/>
    <property type="project" value="UniProtKB"/>
</dbReference>
<dbReference type="GO" id="GO:0000922">
    <property type="term" value="C:spindle pole"/>
    <property type="evidence" value="ECO:0000318"/>
    <property type="project" value="GO_Central"/>
</dbReference>
<dbReference type="GO" id="GO:0008017">
    <property type="term" value="F:microtubule binding"/>
    <property type="evidence" value="ECO:0000250"/>
    <property type="project" value="UniProtKB"/>
</dbReference>
<dbReference type="GO" id="GO:0051301">
    <property type="term" value="P:cell division"/>
    <property type="evidence" value="ECO:0007669"/>
    <property type="project" value="UniProtKB-KW"/>
</dbReference>
<dbReference type="GO" id="GO:0031122">
    <property type="term" value="P:cytoplasmic microtubule organization"/>
    <property type="evidence" value="ECO:0000250"/>
    <property type="project" value="UniProtKB"/>
</dbReference>
<dbReference type="GO" id="GO:0000132">
    <property type="term" value="P:establishment of mitotic spindle orientation"/>
    <property type="evidence" value="ECO:0000250"/>
    <property type="project" value="UniProtKB"/>
</dbReference>
<dbReference type="GO" id="GO:0007097">
    <property type="term" value="P:nuclear migration"/>
    <property type="evidence" value="ECO:0000318"/>
    <property type="project" value="GO_Central"/>
</dbReference>
<dbReference type="GO" id="GO:0090316">
    <property type="term" value="P:positive regulation of intracellular protein transport"/>
    <property type="evidence" value="ECO:0000250"/>
    <property type="project" value="UniProtKB"/>
</dbReference>
<dbReference type="GO" id="GO:0060236">
    <property type="term" value="P:regulation of mitotic spindle organization"/>
    <property type="evidence" value="ECO:0000250"/>
    <property type="project" value="UniProtKB"/>
</dbReference>
<dbReference type="FunFam" id="2.30.30.190:FF:000003">
    <property type="entry name" value="dynactin subunit 1 isoform X1"/>
    <property type="match status" value="1"/>
</dbReference>
<dbReference type="Gene3D" id="2.30.30.190">
    <property type="entry name" value="CAP Gly-rich-like domain"/>
    <property type="match status" value="1"/>
</dbReference>
<dbReference type="InterPro" id="IPR036859">
    <property type="entry name" value="CAP-Gly_dom_sf"/>
</dbReference>
<dbReference type="InterPro" id="IPR000938">
    <property type="entry name" value="CAP-Gly_domain"/>
</dbReference>
<dbReference type="InterPro" id="IPR022157">
    <property type="entry name" value="Dynactin"/>
</dbReference>
<dbReference type="PANTHER" id="PTHR18916">
    <property type="entry name" value="DYNACTIN 1-RELATED MICROTUBULE-BINDING"/>
    <property type="match status" value="1"/>
</dbReference>
<dbReference type="PANTHER" id="PTHR18916:SF6">
    <property type="entry name" value="DYNACTIN SUBUNIT 1"/>
    <property type="match status" value="1"/>
</dbReference>
<dbReference type="Pfam" id="PF01302">
    <property type="entry name" value="CAP_GLY"/>
    <property type="match status" value="1"/>
</dbReference>
<dbReference type="Pfam" id="PF12455">
    <property type="entry name" value="Dynactin"/>
    <property type="match status" value="1"/>
</dbReference>
<dbReference type="SMART" id="SM01052">
    <property type="entry name" value="CAP_GLY"/>
    <property type="match status" value="1"/>
</dbReference>
<dbReference type="SUPFAM" id="SSF74924">
    <property type="entry name" value="Cap-Gly domain"/>
    <property type="match status" value="1"/>
</dbReference>
<dbReference type="PROSITE" id="PS00845">
    <property type="entry name" value="CAP_GLY_1"/>
    <property type="match status" value="1"/>
</dbReference>
<dbReference type="PROSITE" id="PS50245">
    <property type="entry name" value="CAP_GLY_2"/>
    <property type="match status" value="1"/>
</dbReference>
<protein>
    <recommendedName>
        <fullName>Dynactin subunit 1</fullName>
    </recommendedName>
</protein>
<accession>Q6PCJ1</accession>
<organism>
    <name type="scientific">Xenopus laevis</name>
    <name type="common">African clawed frog</name>
    <dbReference type="NCBI Taxonomy" id="8355"/>
    <lineage>
        <taxon>Eukaryota</taxon>
        <taxon>Metazoa</taxon>
        <taxon>Chordata</taxon>
        <taxon>Craniata</taxon>
        <taxon>Vertebrata</taxon>
        <taxon>Euteleostomi</taxon>
        <taxon>Amphibia</taxon>
        <taxon>Batrachia</taxon>
        <taxon>Anura</taxon>
        <taxon>Pipoidea</taxon>
        <taxon>Pipidae</taxon>
        <taxon>Xenopodinae</taxon>
        <taxon>Xenopus</taxon>
        <taxon>Xenopus</taxon>
    </lineage>
</organism>